<keyword id="KW-0963">Cytoplasm</keyword>
<keyword id="KW-0255">Endonuclease</keyword>
<keyword id="KW-0378">Hydrolase</keyword>
<keyword id="KW-0460">Magnesium</keyword>
<keyword id="KW-0479">Metal-binding</keyword>
<keyword id="KW-0507">mRNA processing</keyword>
<keyword id="KW-0540">Nuclease</keyword>
<keyword id="KW-0694">RNA-binding</keyword>
<keyword id="KW-0698">rRNA processing</keyword>
<keyword id="KW-0699">rRNA-binding</keyword>
<keyword id="KW-0819">tRNA processing</keyword>
<reference key="1">
    <citation type="journal article" date="2008" name="BMC Genomics">
        <title>The missing link: Bordetella petrii is endowed with both the metabolic versatility of environmental bacteria and virulence traits of pathogenic Bordetellae.</title>
        <authorList>
            <person name="Gross R."/>
            <person name="Guzman C.A."/>
            <person name="Sebaihia M."/>
            <person name="Martin dos Santos V.A.P."/>
            <person name="Pieper D.H."/>
            <person name="Koebnik R."/>
            <person name="Lechner M."/>
            <person name="Bartels D."/>
            <person name="Buhrmester J."/>
            <person name="Choudhuri J.V."/>
            <person name="Ebensen T."/>
            <person name="Gaigalat L."/>
            <person name="Herrmann S."/>
            <person name="Khachane A.N."/>
            <person name="Larisch C."/>
            <person name="Link S."/>
            <person name="Linke B."/>
            <person name="Meyer F."/>
            <person name="Mormann S."/>
            <person name="Nakunst D."/>
            <person name="Rueckert C."/>
            <person name="Schneiker-Bekel S."/>
            <person name="Schulze K."/>
            <person name="Voerholter F.-J."/>
            <person name="Yevsa T."/>
            <person name="Engle J.T."/>
            <person name="Goldman W.E."/>
            <person name="Puehler A."/>
            <person name="Goebel U.B."/>
            <person name="Goesmann A."/>
            <person name="Bloecker H."/>
            <person name="Kaiser O."/>
            <person name="Martinez-Arias R."/>
        </authorList>
    </citation>
    <scope>NUCLEOTIDE SEQUENCE [LARGE SCALE GENOMIC DNA]</scope>
    <source>
        <strain>ATCC BAA-461 / DSM 12804 / CCUG 43448</strain>
    </source>
</reference>
<name>RNC_BORPD</name>
<organism>
    <name type="scientific">Bordetella petrii (strain ATCC BAA-461 / DSM 12804 / CCUG 43448)</name>
    <dbReference type="NCBI Taxonomy" id="340100"/>
    <lineage>
        <taxon>Bacteria</taxon>
        <taxon>Pseudomonadati</taxon>
        <taxon>Pseudomonadota</taxon>
        <taxon>Betaproteobacteria</taxon>
        <taxon>Burkholderiales</taxon>
        <taxon>Alcaligenaceae</taxon>
        <taxon>Bordetella</taxon>
    </lineage>
</organism>
<proteinExistence type="inferred from homology"/>
<evidence type="ECO:0000255" key="1">
    <source>
        <dbReference type="HAMAP-Rule" id="MF_00104"/>
    </source>
</evidence>
<comment type="function">
    <text evidence="1">Digests double-stranded RNA. Involved in the processing of primary rRNA transcript to yield the immediate precursors to the large and small rRNAs (23S and 16S). Processes some mRNAs, and tRNAs when they are encoded in the rRNA operon. Processes pre-crRNA and tracrRNA of type II CRISPR loci if present in the organism.</text>
</comment>
<comment type="catalytic activity">
    <reaction evidence="1">
        <text>Endonucleolytic cleavage to 5'-phosphomonoester.</text>
        <dbReference type="EC" id="3.1.26.3"/>
    </reaction>
</comment>
<comment type="cofactor">
    <cofactor evidence="1">
        <name>Mg(2+)</name>
        <dbReference type="ChEBI" id="CHEBI:18420"/>
    </cofactor>
</comment>
<comment type="subunit">
    <text evidence="1">Homodimer.</text>
</comment>
<comment type="subcellular location">
    <subcellularLocation>
        <location evidence="1">Cytoplasm</location>
    </subcellularLocation>
</comment>
<comment type="similarity">
    <text evidence="1">Belongs to the ribonuclease III family.</text>
</comment>
<dbReference type="EC" id="3.1.26.3" evidence="1"/>
<dbReference type="EMBL" id="AM902716">
    <property type="protein sequence ID" value="CAP42103.1"/>
    <property type="molecule type" value="Genomic_DNA"/>
</dbReference>
<dbReference type="SMR" id="A9IIJ2"/>
<dbReference type="STRING" id="94624.Bpet1764"/>
<dbReference type="KEGG" id="bpt:Bpet1764"/>
<dbReference type="eggNOG" id="COG0571">
    <property type="taxonomic scope" value="Bacteria"/>
</dbReference>
<dbReference type="Proteomes" id="UP000001225">
    <property type="component" value="Chromosome"/>
</dbReference>
<dbReference type="GO" id="GO:0005737">
    <property type="term" value="C:cytoplasm"/>
    <property type="evidence" value="ECO:0007669"/>
    <property type="project" value="UniProtKB-SubCell"/>
</dbReference>
<dbReference type="GO" id="GO:0003725">
    <property type="term" value="F:double-stranded RNA binding"/>
    <property type="evidence" value="ECO:0007669"/>
    <property type="project" value="TreeGrafter"/>
</dbReference>
<dbReference type="GO" id="GO:0046872">
    <property type="term" value="F:metal ion binding"/>
    <property type="evidence" value="ECO:0007669"/>
    <property type="project" value="UniProtKB-KW"/>
</dbReference>
<dbReference type="GO" id="GO:0004525">
    <property type="term" value="F:ribonuclease III activity"/>
    <property type="evidence" value="ECO:0007669"/>
    <property type="project" value="UniProtKB-UniRule"/>
</dbReference>
<dbReference type="GO" id="GO:0019843">
    <property type="term" value="F:rRNA binding"/>
    <property type="evidence" value="ECO:0007669"/>
    <property type="project" value="UniProtKB-KW"/>
</dbReference>
<dbReference type="GO" id="GO:0006397">
    <property type="term" value="P:mRNA processing"/>
    <property type="evidence" value="ECO:0007669"/>
    <property type="project" value="UniProtKB-UniRule"/>
</dbReference>
<dbReference type="GO" id="GO:0010468">
    <property type="term" value="P:regulation of gene expression"/>
    <property type="evidence" value="ECO:0007669"/>
    <property type="project" value="TreeGrafter"/>
</dbReference>
<dbReference type="GO" id="GO:0006364">
    <property type="term" value="P:rRNA processing"/>
    <property type="evidence" value="ECO:0007669"/>
    <property type="project" value="UniProtKB-UniRule"/>
</dbReference>
<dbReference type="GO" id="GO:0008033">
    <property type="term" value="P:tRNA processing"/>
    <property type="evidence" value="ECO:0007669"/>
    <property type="project" value="UniProtKB-KW"/>
</dbReference>
<dbReference type="CDD" id="cd10845">
    <property type="entry name" value="DSRM_RNAse_III_family"/>
    <property type="match status" value="1"/>
</dbReference>
<dbReference type="CDD" id="cd00593">
    <property type="entry name" value="RIBOc"/>
    <property type="match status" value="1"/>
</dbReference>
<dbReference type="FunFam" id="1.10.1520.10:FF:000001">
    <property type="entry name" value="Ribonuclease 3"/>
    <property type="match status" value="1"/>
</dbReference>
<dbReference type="Gene3D" id="3.30.160.20">
    <property type="match status" value="1"/>
</dbReference>
<dbReference type="Gene3D" id="1.10.1520.10">
    <property type="entry name" value="Ribonuclease III domain"/>
    <property type="match status" value="1"/>
</dbReference>
<dbReference type="HAMAP" id="MF_00104">
    <property type="entry name" value="RNase_III"/>
    <property type="match status" value="1"/>
</dbReference>
<dbReference type="InterPro" id="IPR014720">
    <property type="entry name" value="dsRBD_dom"/>
</dbReference>
<dbReference type="InterPro" id="IPR011907">
    <property type="entry name" value="RNase_III"/>
</dbReference>
<dbReference type="InterPro" id="IPR000999">
    <property type="entry name" value="RNase_III_dom"/>
</dbReference>
<dbReference type="InterPro" id="IPR036389">
    <property type="entry name" value="RNase_III_sf"/>
</dbReference>
<dbReference type="NCBIfam" id="TIGR02191">
    <property type="entry name" value="RNaseIII"/>
    <property type="match status" value="1"/>
</dbReference>
<dbReference type="PANTHER" id="PTHR11207:SF0">
    <property type="entry name" value="RIBONUCLEASE 3"/>
    <property type="match status" value="1"/>
</dbReference>
<dbReference type="PANTHER" id="PTHR11207">
    <property type="entry name" value="RIBONUCLEASE III"/>
    <property type="match status" value="1"/>
</dbReference>
<dbReference type="Pfam" id="PF00035">
    <property type="entry name" value="dsrm"/>
    <property type="match status" value="1"/>
</dbReference>
<dbReference type="Pfam" id="PF14622">
    <property type="entry name" value="Ribonucleas_3_3"/>
    <property type="match status" value="1"/>
</dbReference>
<dbReference type="SMART" id="SM00358">
    <property type="entry name" value="DSRM"/>
    <property type="match status" value="1"/>
</dbReference>
<dbReference type="SMART" id="SM00535">
    <property type="entry name" value="RIBOc"/>
    <property type="match status" value="1"/>
</dbReference>
<dbReference type="SUPFAM" id="SSF54768">
    <property type="entry name" value="dsRNA-binding domain-like"/>
    <property type="match status" value="1"/>
</dbReference>
<dbReference type="SUPFAM" id="SSF69065">
    <property type="entry name" value="RNase III domain-like"/>
    <property type="match status" value="1"/>
</dbReference>
<dbReference type="PROSITE" id="PS50137">
    <property type="entry name" value="DS_RBD"/>
    <property type="match status" value="1"/>
</dbReference>
<dbReference type="PROSITE" id="PS00517">
    <property type="entry name" value="RNASE_3_1"/>
    <property type="match status" value="1"/>
</dbReference>
<dbReference type="PROSITE" id="PS50142">
    <property type="entry name" value="RNASE_3_2"/>
    <property type="match status" value="1"/>
</dbReference>
<protein>
    <recommendedName>
        <fullName evidence="1">Ribonuclease 3</fullName>
        <ecNumber evidence="1">3.1.26.3</ecNumber>
    </recommendedName>
    <alternativeName>
        <fullName evidence="1">Ribonuclease III</fullName>
        <shortName evidence="1">RNase III</shortName>
    </alternativeName>
</protein>
<feature type="chain" id="PRO_1000094097" description="Ribonuclease 3">
    <location>
        <begin position="1"/>
        <end position="252"/>
    </location>
</feature>
<feature type="domain" description="RNase III" evidence="1">
    <location>
        <begin position="3"/>
        <end position="125"/>
    </location>
</feature>
<feature type="domain" description="DRBM" evidence="1">
    <location>
        <begin position="152"/>
        <end position="222"/>
    </location>
</feature>
<feature type="active site" evidence="1">
    <location>
        <position position="42"/>
    </location>
</feature>
<feature type="active site" evidence="1">
    <location>
        <position position="114"/>
    </location>
</feature>
<feature type="binding site" evidence="1">
    <location>
        <position position="38"/>
    </location>
    <ligand>
        <name>Mg(2+)</name>
        <dbReference type="ChEBI" id="CHEBI:18420"/>
    </ligand>
</feature>
<feature type="binding site" evidence="1">
    <location>
        <position position="111"/>
    </location>
    <ligand>
        <name>Mg(2+)</name>
        <dbReference type="ChEBI" id="CHEBI:18420"/>
    </ligand>
</feature>
<feature type="binding site" evidence="1">
    <location>
        <position position="114"/>
    </location>
    <ligand>
        <name>Mg(2+)</name>
        <dbReference type="ChEBI" id="CHEBI:18420"/>
    </ligand>
</feature>
<accession>A9IIJ2</accession>
<sequence length="252" mass="27268">MSLATLETRLDHRFGNAALLEQALTHRSHSARHNERLEFLGDSVLNFVVAAMLFERFPKLDEGDLSRLRANLVKQASLADIGQRLELSQYLRLGEGELKSGGFRRPSILADAVEAIFGAAFLDGGFDTARKVIVRQYQPVLASVDPKTLGKDAKTLLQEFLQGRKLALPLYTVVATHGAAHSQQFEVECAIPALEIKVVAPGASRRAAEQSAAKLALEAAQAASPARAVRKQGKARKAAQLSLPVAVAQEVK</sequence>
<gene>
    <name evidence="1" type="primary">rnc</name>
    <name type="ordered locus">Bpet1764</name>
</gene>